<accession>P62543</accession>
<accession>P11385</accession>
<proteinExistence type="evidence at protein level"/>
<feature type="peptide" id="PRO_0000043430" description="Hypertrehalosaemic neuropeptide">
    <location>
        <begin position="1"/>
        <end position="10"/>
    </location>
</feature>
<feature type="modified residue" description="Pyrrolidone carboxylic acid" evidence="1">
    <location>
        <position position="1"/>
    </location>
</feature>
<feature type="modified residue" description="Threonine amide" evidence="1">
    <location>
        <position position="10"/>
    </location>
</feature>
<sequence length="10" mass="1164">QLTFTPNWGT</sequence>
<dbReference type="PIR" id="S09138">
    <property type="entry name" value="S09138"/>
</dbReference>
<dbReference type="GO" id="GO:0005576">
    <property type="term" value="C:extracellular region"/>
    <property type="evidence" value="ECO:0007669"/>
    <property type="project" value="UniProtKB-SubCell"/>
</dbReference>
<dbReference type="GO" id="GO:0005179">
    <property type="term" value="F:hormone activity"/>
    <property type="evidence" value="ECO:0007669"/>
    <property type="project" value="UniProtKB-KW"/>
</dbReference>
<dbReference type="GO" id="GO:0007218">
    <property type="term" value="P:neuropeptide signaling pathway"/>
    <property type="evidence" value="ECO:0007669"/>
    <property type="project" value="UniProtKB-KW"/>
</dbReference>
<dbReference type="InterPro" id="IPR002047">
    <property type="entry name" value="Adipokinetic_hormone_CS"/>
</dbReference>
<dbReference type="PROSITE" id="PS00256">
    <property type="entry name" value="AKH"/>
    <property type="match status" value="1"/>
</dbReference>
<reference key="1">
    <citation type="journal article" date="1990" name="Biol. Chem. Hoppe-Seyler">
        <title>Primary structures of hypertrehalosaemic neuropeptides isolated from the corpora cardiaca of the cockroaches Leucophaea maderae, Gromphadorhina portentosa, Blattella germanica and Blatta orientalis and of the stick insect Extatosoma tiaratum assigned by tandem fast atom bombardment mass spectrometry.</title>
        <authorList>
            <person name="Gaede G."/>
            <person name="Rinehart K.L. Jr."/>
        </authorList>
    </citation>
    <scope>PROTEIN SEQUENCE</scope>
    <scope>PYROGLUTAMATE FORMATION AT GLN-1</scope>
    <scope>AMIDATION AT THR-10</scope>
    <source>
        <tissue>Corpora cardiaca</tissue>
    </source>
</reference>
<evidence type="ECO:0000269" key="1">
    <source>
    </source>
</evidence>
<evidence type="ECO:0000305" key="2"/>
<protein>
    <recommendedName>
        <fullName>Hypertrehalosaemic neuropeptide</fullName>
    </recommendedName>
</protein>
<comment type="function">
    <text>Hypertrehalosaemic factors are neuropeptides that elevate the level of trehalose in the hemolymph (trehalose is the major carbohydrate in the hemolymph of insects).</text>
</comment>
<comment type="subcellular location">
    <subcellularLocation>
        <location>Secreted</location>
    </subcellularLocation>
</comment>
<comment type="similarity">
    <text evidence="2">Belongs to the AKH/HRTH/RPCH family.</text>
</comment>
<organism>
    <name type="scientific">Extatosoma tiaratum</name>
    <name type="common">Giant prickly stick insect</name>
    <name type="synonym">Phasma tiaratum</name>
    <dbReference type="NCBI Taxonomy" id="7024"/>
    <lineage>
        <taxon>Eukaryota</taxon>
        <taxon>Metazoa</taxon>
        <taxon>Ecdysozoa</taxon>
        <taxon>Arthropoda</taxon>
        <taxon>Hexapoda</taxon>
        <taxon>Insecta</taxon>
        <taxon>Pterygota</taxon>
        <taxon>Neoptera</taxon>
        <taxon>Polyneoptera</taxon>
        <taxon>Phasmatodea</taxon>
        <taxon>Verophasmatodea</taxon>
        <taxon>Anareolatae</taxon>
        <taxon>Phasmatidae</taxon>
        <taxon>Tropidoderinae</taxon>
        <taxon>Extatosoma</taxon>
    </lineage>
</organism>
<name>HTF_EXTTI</name>
<keyword id="KW-0027">Amidation</keyword>
<keyword id="KW-0903">Direct protein sequencing</keyword>
<keyword id="KW-0372">Hormone</keyword>
<keyword id="KW-0527">Neuropeptide</keyword>
<keyword id="KW-0873">Pyrrolidone carboxylic acid</keyword>
<keyword id="KW-0964">Secreted</keyword>